<name>RUVA_CLASE</name>
<feature type="chain" id="PRO_1000074415" description="Holliday junction branch migration complex subunit RuvA">
    <location>
        <begin position="1"/>
        <end position="214"/>
    </location>
</feature>
<feature type="region of interest" description="Domain I" evidence="1">
    <location>
        <begin position="1"/>
        <end position="63"/>
    </location>
</feature>
<feature type="region of interest" description="Domain II" evidence="1">
    <location>
        <begin position="64"/>
        <end position="139"/>
    </location>
</feature>
<feature type="region of interest" description="Flexible linker" evidence="1">
    <location>
        <begin position="139"/>
        <end position="143"/>
    </location>
</feature>
<feature type="region of interest" description="Domain III" evidence="1">
    <location>
        <begin position="144"/>
        <end position="214"/>
    </location>
</feature>
<proteinExistence type="inferred from homology"/>
<evidence type="ECO:0000255" key="1">
    <source>
        <dbReference type="HAMAP-Rule" id="MF_00031"/>
    </source>
</evidence>
<protein>
    <recommendedName>
        <fullName evidence="1">Holliday junction branch migration complex subunit RuvA</fullName>
    </recommendedName>
</protein>
<sequence length="214" mass="21964">MISSLRGTVLSVSGQTLLLEVHGVGYGVSVTPRHALELRHGSEATVLTSLVVREDSLTLFGFPGPDELRAFELLCGVTGVGPKSALAVLEHLDPEAMAQAVAAEDDAAFRRVSGIGPKTAKLIVLQLAGKLFVTQPRTRSASSAASTVTADVVTALIGLGWSERVARTAVDDAAAAAAEQGLPADMPRLLRVALGMLGPQQPAGAPAAAQAADR</sequence>
<organism>
    <name type="scientific">Clavibacter sepedonicus</name>
    <name type="common">Clavibacter michiganensis subsp. sepedonicus</name>
    <dbReference type="NCBI Taxonomy" id="31964"/>
    <lineage>
        <taxon>Bacteria</taxon>
        <taxon>Bacillati</taxon>
        <taxon>Actinomycetota</taxon>
        <taxon>Actinomycetes</taxon>
        <taxon>Micrococcales</taxon>
        <taxon>Microbacteriaceae</taxon>
        <taxon>Clavibacter</taxon>
    </lineage>
</organism>
<accession>B0REB9</accession>
<keyword id="KW-0963">Cytoplasm</keyword>
<keyword id="KW-0227">DNA damage</keyword>
<keyword id="KW-0233">DNA recombination</keyword>
<keyword id="KW-0234">DNA repair</keyword>
<keyword id="KW-0238">DNA-binding</keyword>
<dbReference type="EMBL" id="AM849034">
    <property type="protein sequence ID" value="CAQ00837.1"/>
    <property type="molecule type" value="Genomic_DNA"/>
</dbReference>
<dbReference type="RefSeq" id="WP_012298146.1">
    <property type="nucleotide sequence ID" value="NZ_MZMN01000003.1"/>
</dbReference>
<dbReference type="SMR" id="B0REB9"/>
<dbReference type="STRING" id="31964.CMS0717"/>
<dbReference type="KEGG" id="cms:CMS0717"/>
<dbReference type="eggNOG" id="COG0632">
    <property type="taxonomic scope" value="Bacteria"/>
</dbReference>
<dbReference type="HOGENOM" id="CLU_087936_2_1_11"/>
<dbReference type="OrthoDB" id="5293449at2"/>
<dbReference type="Proteomes" id="UP000001318">
    <property type="component" value="Chromosome"/>
</dbReference>
<dbReference type="GO" id="GO:0005737">
    <property type="term" value="C:cytoplasm"/>
    <property type="evidence" value="ECO:0007669"/>
    <property type="project" value="UniProtKB-SubCell"/>
</dbReference>
<dbReference type="GO" id="GO:0009379">
    <property type="term" value="C:Holliday junction helicase complex"/>
    <property type="evidence" value="ECO:0007669"/>
    <property type="project" value="InterPro"/>
</dbReference>
<dbReference type="GO" id="GO:0048476">
    <property type="term" value="C:Holliday junction resolvase complex"/>
    <property type="evidence" value="ECO:0007669"/>
    <property type="project" value="UniProtKB-UniRule"/>
</dbReference>
<dbReference type="GO" id="GO:0005524">
    <property type="term" value="F:ATP binding"/>
    <property type="evidence" value="ECO:0007669"/>
    <property type="project" value="InterPro"/>
</dbReference>
<dbReference type="GO" id="GO:0000400">
    <property type="term" value="F:four-way junction DNA binding"/>
    <property type="evidence" value="ECO:0007669"/>
    <property type="project" value="UniProtKB-UniRule"/>
</dbReference>
<dbReference type="GO" id="GO:0009378">
    <property type="term" value="F:four-way junction helicase activity"/>
    <property type="evidence" value="ECO:0007669"/>
    <property type="project" value="InterPro"/>
</dbReference>
<dbReference type="GO" id="GO:0006310">
    <property type="term" value="P:DNA recombination"/>
    <property type="evidence" value="ECO:0007669"/>
    <property type="project" value="UniProtKB-UniRule"/>
</dbReference>
<dbReference type="GO" id="GO:0006281">
    <property type="term" value="P:DNA repair"/>
    <property type="evidence" value="ECO:0007669"/>
    <property type="project" value="UniProtKB-UniRule"/>
</dbReference>
<dbReference type="Gene3D" id="1.10.150.20">
    <property type="entry name" value="5' to 3' exonuclease, C-terminal subdomain"/>
    <property type="match status" value="1"/>
</dbReference>
<dbReference type="Gene3D" id="1.10.8.10">
    <property type="entry name" value="DNA helicase RuvA subunit, C-terminal domain"/>
    <property type="match status" value="1"/>
</dbReference>
<dbReference type="Gene3D" id="2.40.50.140">
    <property type="entry name" value="Nucleic acid-binding proteins"/>
    <property type="match status" value="1"/>
</dbReference>
<dbReference type="HAMAP" id="MF_00031">
    <property type="entry name" value="DNA_HJ_migration_RuvA"/>
    <property type="match status" value="1"/>
</dbReference>
<dbReference type="InterPro" id="IPR013849">
    <property type="entry name" value="DNA_helicase_Holl-junc_RuvA_I"/>
</dbReference>
<dbReference type="InterPro" id="IPR003583">
    <property type="entry name" value="Hlx-hairpin-Hlx_DNA-bd_motif"/>
</dbReference>
<dbReference type="InterPro" id="IPR012340">
    <property type="entry name" value="NA-bd_OB-fold"/>
</dbReference>
<dbReference type="InterPro" id="IPR000085">
    <property type="entry name" value="RuvA"/>
</dbReference>
<dbReference type="InterPro" id="IPR010994">
    <property type="entry name" value="RuvA_2-like"/>
</dbReference>
<dbReference type="InterPro" id="IPR011114">
    <property type="entry name" value="RuvA_C"/>
</dbReference>
<dbReference type="InterPro" id="IPR036267">
    <property type="entry name" value="RuvA_C_sf"/>
</dbReference>
<dbReference type="NCBIfam" id="TIGR00084">
    <property type="entry name" value="ruvA"/>
    <property type="match status" value="1"/>
</dbReference>
<dbReference type="Pfam" id="PF14520">
    <property type="entry name" value="HHH_5"/>
    <property type="match status" value="1"/>
</dbReference>
<dbReference type="Pfam" id="PF07499">
    <property type="entry name" value="RuvA_C"/>
    <property type="match status" value="1"/>
</dbReference>
<dbReference type="Pfam" id="PF01330">
    <property type="entry name" value="RuvA_N"/>
    <property type="match status" value="1"/>
</dbReference>
<dbReference type="SMART" id="SM00278">
    <property type="entry name" value="HhH1"/>
    <property type="match status" value="2"/>
</dbReference>
<dbReference type="SUPFAM" id="SSF46929">
    <property type="entry name" value="DNA helicase RuvA subunit, C-terminal domain"/>
    <property type="match status" value="1"/>
</dbReference>
<dbReference type="SUPFAM" id="SSF50249">
    <property type="entry name" value="Nucleic acid-binding proteins"/>
    <property type="match status" value="1"/>
</dbReference>
<dbReference type="SUPFAM" id="SSF47781">
    <property type="entry name" value="RuvA domain 2-like"/>
    <property type="match status" value="1"/>
</dbReference>
<gene>
    <name evidence="1" type="primary">ruvA</name>
    <name type="ordered locus">CMS0717</name>
</gene>
<reference key="1">
    <citation type="journal article" date="2008" name="J. Bacteriol.">
        <title>Genome of the actinomycete plant pathogen Clavibacter michiganensis subsp. sepedonicus suggests recent niche adaptation.</title>
        <authorList>
            <person name="Bentley S.D."/>
            <person name="Corton C."/>
            <person name="Brown S.E."/>
            <person name="Barron A."/>
            <person name="Clark L."/>
            <person name="Doggett J."/>
            <person name="Harris B."/>
            <person name="Ormond D."/>
            <person name="Quail M.A."/>
            <person name="May G."/>
            <person name="Francis D."/>
            <person name="Knudson D."/>
            <person name="Parkhill J."/>
            <person name="Ishimaru C.A."/>
        </authorList>
    </citation>
    <scope>NUCLEOTIDE SEQUENCE [LARGE SCALE GENOMIC DNA]</scope>
    <source>
        <strain>ATCC 33113 / DSM 20744 / JCM 9667 / LMG 2889 / ICMP 2535 / C-1</strain>
    </source>
</reference>
<comment type="function">
    <text evidence="1">The RuvA-RuvB-RuvC complex processes Holliday junction (HJ) DNA during genetic recombination and DNA repair, while the RuvA-RuvB complex plays an important role in the rescue of blocked DNA replication forks via replication fork reversal (RFR). RuvA specifically binds to HJ cruciform DNA, conferring on it an open structure. The RuvB hexamer acts as an ATP-dependent pump, pulling dsDNA into and through the RuvAB complex. HJ branch migration allows RuvC to scan DNA until it finds its consensus sequence, where it cleaves and resolves the cruciform DNA.</text>
</comment>
<comment type="subunit">
    <text evidence="1">Homotetramer. Forms an RuvA(8)-RuvB(12)-Holliday junction (HJ) complex. HJ DNA is sandwiched between 2 RuvA tetramers; dsDNA enters through RuvA and exits via RuvB. An RuvB hexamer assembles on each DNA strand where it exits the tetramer. Each RuvB hexamer is contacted by two RuvA subunits (via domain III) on 2 adjacent RuvB subunits; this complex drives branch migration. In the full resolvosome a probable DNA-RuvA(4)-RuvB(12)-RuvC(2) complex forms which resolves the HJ.</text>
</comment>
<comment type="subcellular location">
    <subcellularLocation>
        <location evidence="1">Cytoplasm</location>
    </subcellularLocation>
</comment>
<comment type="domain">
    <text evidence="1">Has three domains with a flexible linker between the domains II and III and assumes an 'L' shape. Domain III is highly mobile and contacts RuvB.</text>
</comment>
<comment type="similarity">
    <text evidence="1">Belongs to the RuvA family.</text>
</comment>